<protein>
    <recommendedName>
        <fullName evidence="1">4-hydroxy-2-oxovalerate aldolase 4</fullName>
        <shortName evidence="1">HOA 4</shortName>
        <ecNumber evidence="1">4.1.3.39</ecNumber>
    </recommendedName>
    <alternativeName>
        <fullName evidence="1">4-hydroxy-2-keto-pentanoic acid aldolase 4</fullName>
    </alternativeName>
    <alternativeName>
        <fullName evidence="1">4-hydroxy-2-oxopentanoate aldolase 4</fullName>
    </alternativeName>
</protein>
<dbReference type="EC" id="4.1.3.39" evidence="1"/>
<dbReference type="EMBL" id="CP000431">
    <property type="protein sequence ID" value="ABG97578.1"/>
    <property type="molecule type" value="Genomic_DNA"/>
</dbReference>
<dbReference type="RefSeq" id="WP_011597909.1">
    <property type="nucleotide sequence ID" value="NC_008268.1"/>
</dbReference>
<dbReference type="SMR" id="Q0S4F8"/>
<dbReference type="KEGG" id="rha:RHA1_ro05801"/>
<dbReference type="PATRIC" id="fig|101510.16.peg.5839"/>
<dbReference type="eggNOG" id="COG0119">
    <property type="taxonomic scope" value="Bacteria"/>
</dbReference>
<dbReference type="HOGENOM" id="CLU_049173_0_0_11"/>
<dbReference type="OrthoDB" id="9803573at2"/>
<dbReference type="Proteomes" id="UP000008710">
    <property type="component" value="Chromosome"/>
</dbReference>
<dbReference type="GO" id="GO:0003852">
    <property type="term" value="F:2-isopropylmalate synthase activity"/>
    <property type="evidence" value="ECO:0007669"/>
    <property type="project" value="TreeGrafter"/>
</dbReference>
<dbReference type="GO" id="GO:0008701">
    <property type="term" value="F:4-hydroxy-2-oxovalerate aldolase activity"/>
    <property type="evidence" value="ECO:0007669"/>
    <property type="project" value="UniProtKB-UniRule"/>
</dbReference>
<dbReference type="GO" id="GO:0030145">
    <property type="term" value="F:manganese ion binding"/>
    <property type="evidence" value="ECO:0007669"/>
    <property type="project" value="UniProtKB-UniRule"/>
</dbReference>
<dbReference type="GO" id="GO:0009056">
    <property type="term" value="P:catabolic process"/>
    <property type="evidence" value="ECO:0007669"/>
    <property type="project" value="UniProtKB-KW"/>
</dbReference>
<dbReference type="GO" id="GO:0009098">
    <property type="term" value="P:L-leucine biosynthetic process"/>
    <property type="evidence" value="ECO:0007669"/>
    <property type="project" value="TreeGrafter"/>
</dbReference>
<dbReference type="CDD" id="cd07943">
    <property type="entry name" value="DRE_TIM_HOA"/>
    <property type="match status" value="1"/>
</dbReference>
<dbReference type="Gene3D" id="1.10.8.60">
    <property type="match status" value="1"/>
</dbReference>
<dbReference type="Gene3D" id="3.20.20.70">
    <property type="entry name" value="Aldolase class I"/>
    <property type="match status" value="1"/>
</dbReference>
<dbReference type="HAMAP" id="MF_01656">
    <property type="entry name" value="HOA"/>
    <property type="match status" value="1"/>
</dbReference>
<dbReference type="InterPro" id="IPR050073">
    <property type="entry name" value="2-IPM_HCS-like"/>
</dbReference>
<dbReference type="InterPro" id="IPR017629">
    <property type="entry name" value="4OH_2_O-val_aldolase"/>
</dbReference>
<dbReference type="InterPro" id="IPR013785">
    <property type="entry name" value="Aldolase_TIM"/>
</dbReference>
<dbReference type="InterPro" id="IPR012425">
    <property type="entry name" value="DmpG_comm"/>
</dbReference>
<dbReference type="InterPro" id="IPR035685">
    <property type="entry name" value="DRE_TIM_HOA"/>
</dbReference>
<dbReference type="InterPro" id="IPR000891">
    <property type="entry name" value="PYR_CT"/>
</dbReference>
<dbReference type="NCBIfam" id="TIGR03217">
    <property type="entry name" value="4OH_2_O_val_ald"/>
    <property type="match status" value="1"/>
</dbReference>
<dbReference type="NCBIfam" id="NF006049">
    <property type="entry name" value="PRK08195.1"/>
    <property type="match status" value="1"/>
</dbReference>
<dbReference type="PANTHER" id="PTHR10277:SF9">
    <property type="entry name" value="2-ISOPROPYLMALATE SYNTHASE 1, CHLOROPLASTIC-RELATED"/>
    <property type="match status" value="1"/>
</dbReference>
<dbReference type="PANTHER" id="PTHR10277">
    <property type="entry name" value="HOMOCITRATE SYNTHASE-RELATED"/>
    <property type="match status" value="1"/>
</dbReference>
<dbReference type="Pfam" id="PF07836">
    <property type="entry name" value="DmpG_comm"/>
    <property type="match status" value="1"/>
</dbReference>
<dbReference type="Pfam" id="PF00682">
    <property type="entry name" value="HMGL-like"/>
    <property type="match status" value="1"/>
</dbReference>
<dbReference type="SUPFAM" id="SSF51569">
    <property type="entry name" value="Aldolase"/>
    <property type="match status" value="1"/>
</dbReference>
<dbReference type="SUPFAM" id="SSF89000">
    <property type="entry name" value="post-HMGL domain-like"/>
    <property type="match status" value="1"/>
</dbReference>
<dbReference type="PROSITE" id="PS50991">
    <property type="entry name" value="PYR_CT"/>
    <property type="match status" value="1"/>
</dbReference>
<feature type="chain" id="PRO_0000387904" description="4-hydroxy-2-oxovalerate aldolase 4">
    <location>
        <begin position="1"/>
        <end position="352"/>
    </location>
</feature>
<feature type="domain" description="Pyruvate carboxyltransferase" evidence="1">
    <location>
        <begin position="9"/>
        <end position="261"/>
    </location>
</feature>
<feature type="active site" description="Proton acceptor" evidence="1">
    <location>
        <position position="21"/>
    </location>
</feature>
<feature type="binding site" evidence="1">
    <location>
        <begin position="17"/>
        <end position="18"/>
    </location>
    <ligand>
        <name>substrate</name>
    </ligand>
</feature>
<feature type="binding site" evidence="1">
    <location>
        <position position="18"/>
    </location>
    <ligand>
        <name>Mn(2+)</name>
        <dbReference type="ChEBI" id="CHEBI:29035"/>
    </ligand>
</feature>
<feature type="binding site" evidence="1">
    <location>
        <position position="171"/>
    </location>
    <ligand>
        <name>substrate</name>
    </ligand>
</feature>
<feature type="binding site" evidence="1">
    <location>
        <position position="200"/>
    </location>
    <ligand>
        <name>Mn(2+)</name>
        <dbReference type="ChEBI" id="CHEBI:29035"/>
    </ligand>
</feature>
<feature type="binding site" evidence="1">
    <location>
        <position position="200"/>
    </location>
    <ligand>
        <name>substrate</name>
    </ligand>
</feature>
<feature type="binding site" evidence="1">
    <location>
        <position position="202"/>
    </location>
    <ligand>
        <name>Mn(2+)</name>
        <dbReference type="ChEBI" id="CHEBI:29035"/>
    </ligand>
</feature>
<feature type="binding site" evidence="1">
    <location>
        <position position="291"/>
    </location>
    <ligand>
        <name>substrate</name>
    </ligand>
</feature>
<feature type="site" description="Transition state stabilizer" evidence="1">
    <location>
        <position position="17"/>
    </location>
</feature>
<sequence>MPYSADLDIRVTDSSLRDGSHAKRHQFTVEHVRSIVGALDAAGVPVIEVTHGDGLGGSSFNYGFSHTPEQELIKAAVETAERARIAFLMLPGLGVQSDIREAADNGASICRIATHCTEADISVQHFGLARELGLETVGFLMMSHSQPPEVLAKQARIMADAGCQCVYVVDSAGALILNAVSDRVSALVAELGDDAQVGFHGHENLGLGVANSVLAVEAGALQIDGSTRRFGAGAGNTPVEAFAAVTEKLGIRTGIDTLKIIDAAEDVVRPIMDGDCQLDRLSLMMGYAGVYSSFLKHADSHARRYGVSGAEILIEAGRRKLVGGQEDQLIEIALGLADRGPAGSAVAEKKSA</sequence>
<proteinExistence type="inferred from homology"/>
<accession>Q0S4F8</accession>
<name>HOA4_RHOJR</name>
<reference key="1">
    <citation type="journal article" date="2006" name="Proc. Natl. Acad. Sci. U.S.A.">
        <title>The complete genome of Rhodococcus sp. RHA1 provides insights into a catabolic powerhouse.</title>
        <authorList>
            <person name="McLeod M.P."/>
            <person name="Warren R.L."/>
            <person name="Hsiao W.W.L."/>
            <person name="Araki N."/>
            <person name="Myhre M."/>
            <person name="Fernandes C."/>
            <person name="Miyazawa D."/>
            <person name="Wong W."/>
            <person name="Lillquist A.L."/>
            <person name="Wang D."/>
            <person name="Dosanjh M."/>
            <person name="Hara H."/>
            <person name="Petrescu A."/>
            <person name="Morin R.D."/>
            <person name="Yang G."/>
            <person name="Stott J.M."/>
            <person name="Schein J.E."/>
            <person name="Shin H."/>
            <person name="Smailus D."/>
            <person name="Siddiqui A.S."/>
            <person name="Marra M.A."/>
            <person name="Jones S.J.M."/>
            <person name="Holt R."/>
            <person name="Brinkman F.S.L."/>
            <person name="Miyauchi K."/>
            <person name="Fukuda M."/>
            <person name="Davies J.E."/>
            <person name="Mohn W.W."/>
            <person name="Eltis L.D."/>
        </authorList>
    </citation>
    <scope>NUCLEOTIDE SEQUENCE [LARGE SCALE GENOMIC DNA]</scope>
    <source>
        <strain>RHA1</strain>
    </source>
</reference>
<gene>
    <name type="ordered locus">RHA1_ro05801</name>
</gene>
<comment type="catalytic activity">
    <reaction evidence="1">
        <text>(S)-4-hydroxy-2-oxopentanoate = acetaldehyde + pyruvate</text>
        <dbReference type="Rhea" id="RHEA:22624"/>
        <dbReference type="ChEBI" id="CHEBI:15343"/>
        <dbReference type="ChEBI" id="CHEBI:15361"/>
        <dbReference type="ChEBI" id="CHEBI:73143"/>
        <dbReference type="EC" id="4.1.3.39"/>
    </reaction>
</comment>
<comment type="similarity">
    <text evidence="1">Belongs to the 4-hydroxy-2-oxovalerate aldolase family.</text>
</comment>
<keyword id="KW-0058">Aromatic hydrocarbons catabolism</keyword>
<keyword id="KW-0456">Lyase</keyword>
<keyword id="KW-0464">Manganese</keyword>
<keyword id="KW-0479">Metal-binding</keyword>
<organism>
    <name type="scientific">Rhodococcus jostii (strain RHA1)</name>
    <dbReference type="NCBI Taxonomy" id="101510"/>
    <lineage>
        <taxon>Bacteria</taxon>
        <taxon>Bacillati</taxon>
        <taxon>Actinomycetota</taxon>
        <taxon>Actinomycetes</taxon>
        <taxon>Mycobacteriales</taxon>
        <taxon>Nocardiaceae</taxon>
        <taxon>Rhodococcus</taxon>
    </lineage>
</organism>
<evidence type="ECO:0000255" key="1">
    <source>
        <dbReference type="HAMAP-Rule" id="MF_01656"/>
    </source>
</evidence>